<accession>Q863H3</accession>
<accession>A3R3C2</accession>
<accession>A3R3C3</accession>
<accession>A3R3C4</accession>
<keyword id="KW-1064">Adaptive immunity</keyword>
<keyword id="KW-1003">Cell membrane</keyword>
<keyword id="KW-1015">Disulfide bond</keyword>
<keyword id="KW-0325">Glycoprotein</keyword>
<keyword id="KW-0391">Immunity</keyword>
<keyword id="KW-0399">Innate immunity</keyword>
<keyword id="KW-0430">Lectin</keyword>
<keyword id="KW-0472">Membrane</keyword>
<keyword id="KW-0675">Receptor</keyword>
<keyword id="KW-1185">Reference proteome</keyword>
<keyword id="KW-0735">Signal-anchor</keyword>
<keyword id="KW-0812">Transmembrane</keyword>
<keyword id="KW-1133">Transmembrane helix</keyword>
<protein>
    <recommendedName>
        <fullName>Natural killer cells antigen CD94</fullName>
    </recommendedName>
    <alternativeName>
        <fullName>Killer cell lectin-like receptor subfamily D member 1</fullName>
    </alternativeName>
    <cdAntigenName>CD94</cdAntigenName>
</protein>
<dbReference type="EMBL" id="AF422180">
    <property type="protein sequence ID" value="AAP33622.1"/>
    <property type="molecule type" value="mRNA"/>
</dbReference>
<dbReference type="EMBL" id="EF081290">
    <property type="protein sequence ID" value="ABO15594.1"/>
    <property type="molecule type" value="mRNA"/>
</dbReference>
<dbReference type="EMBL" id="EF081291">
    <property type="protein sequence ID" value="ABO15595.1"/>
    <property type="molecule type" value="mRNA"/>
</dbReference>
<dbReference type="EMBL" id="EF081292">
    <property type="protein sequence ID" value="ABO15596.1"/>
    <property type="molecule type" value="mRNA"/>
</dbReference>
<dbReference type="RefSeq" id="NP_001002890.1">
    <property type="nucleotide sequence ID" value="NM_001002890.1"/>
</dbReference>
<dbReference type="SMR" id="Q863H3"/>
<dbReference type="FunCoup" id="Q863H3">
    <property type="interactions" value="174"/>
</dbReference>
<dbReference type="STRING" id="9913.ENSBTAP00000037681"/>
<dbReference type="GlyCosmos" id="Q863H3">
    <property type="glycosylation" value="2 sites, No reported glycans"/>
</dbReference>
<dbReference type="GlyGen" id="Q863H3">
    <property type="glycosylation" value="2 sites"/>
</dbReference>
<dbReference type="PaxDb" id="9913-ENSBTAP00000037681"/>
<dbReference type="GeneID" id="444877"/>
<dbReference type="KEGG" id="bta:444877"/>
<dbReference type="CTD" id="3824"/>
<dbReference type="eggNOG" id="KOG4297">
    <property type="taxonomic scope" value="Eukaryota"/>
</dbReference>
<dbReference type="HOGENOM" id="CLU_049894_9_3_1"/>
<dbReference type="InParanoid" id="Q863H3"/>
<dbReference type="OrthoDB" id="6337382at2759"/>
<dbReference type="TreeFam" id="TF336674"/>
<dbReference type="Proteomes" id="UP000009136">
    <property type="component" value="Unplaced"/>
</dbReference>
<dbReference type="GO" id="GO:0009897">
    <property type="term" value="C:external side of plasma membrane"/>
    <property type="evidence" value="ECO:0000318"/>
    <property type="project" value="GO_Central"/>
</dbReference>
<dbReference type="GO" id="GO:0005886">
    <property type="term" value="C:plasma membrane"/>
    <property type="evidence" value="ECO:0000250"/>
    <property type="project" value="UniProtKB"/>
</dbReference>
<dbReference type="GO" id="GO:0030246">
    <property type="term" value="F:carbohydrate binding"/>
    <property type="evidence" value="ECO:0007669"/>
    <property type="project" value="UniProtKB-KW"/>
</dbReference>
<dbReference type="GO" id="GO:0004888">
    <property type="term" value="F:transmembrane signaling receptor activity"/>
    <property type="evidence" value="ECO:0000318"/>
    <property type="project" value="GO_Central"/>
</dbReference>
<dbReference type="GO" id="GO:0002250">
    <property type="term" value="P:adaptive immune response"/>
    <property type="evidence" value="ECO:0007669"/>
    <property type="project" value="UniProtKB-KW"/>
</dbReference>
<dbReference type="GO" id="GO:0045087">
    <property type="term" value="P:innate immune response"/>
    <property type="evidence" value="ECO:0007669"/>
    <property type="project" value="UniProtKB-KW"/>
</dbReference>
<dbReference type="GO" id="GO:0045953">
    <property type="term" value="P:negative regulation of natural killer cell mediated cytotoxicity"/>
    <property type="evidence" value="ECO:0000250"/>
    <property type="project" value="UniProtKB"/>
</dbReference>
<dbReference type="GO" id="GO:0001915">
    <property type="term" value="P:negative regulation of T cell mediated cytotoxicity"/>
    <property type="evidence" value="ECO:0000250"/>
    <property type="project" value="UniProtKB"/>
</dbReference>
<dbReference type="GO" id="GO:0045954">
    <property type="term" value="P:positive regulation of natural killer cell mediated cytotoxicity"/>
    <property type="evidence" value="ECO:0000318"/>
    <property type="project" value="GO_Central"/>
</dbReference>
<dbReference type="GO" id="GO:0002223">
    <property type="term" value="P:stimulatory C-type lectin receptor signaling pathway"/>
    <property type="evidence" value="ECO:0000250"/>
    <property type="project" value="UniProtKB"/>
</dbReference>
<dbReference type="CDD" id="cd03593">
    <property type="entry name" value="CLECT_NK_receptors_like"/>
    <property type="match status" value="1"/>
</dbReference>
<dbReference type="Gene3D" id="3.10.100.10">
    <property type="entry name" value="Mannose-Binding Protein A, subunit A"/>
    <property type="match status" value="1"/>
</dbReference>
<dbReference type="InterPro" id="IPR001304">
    <property type="entry name" value="C-type_lectin-like"/>
</dbReference>
<dbReference type="InterPro" id="IPR016186">
    <property type="entry name" value="C-type_lectin-like/link_sf"/>
</dbReference>
<dbReference type="InterPro" id="IPR016187">
    <property type="entry name" value="CTDL_fold"/>
</dbReference>
<dbReference type="InterPro" id="IPR050919">
    <property type="entry name" value="NKG2/CD94_NK_receptors"/>
</dbReference>
<dbReference type="InterPro" id="IPR033992">
    <property type="entry name" value="NKR-like_CTLD"/>
</dbReference>
<dbReference type="PANTHER" id="PTHR22800">
    <property type="entry name" value="C-TYPE LECTIN PROTEINS"/>
    <property type="match status" value="1"/>
</dbReference>
<dbReference type="PANTHER" id="PTHR22800:SF252">
    <property type="entry name" value="NATURAL KILLER CELLS ANTIGEN CD94"/>
    <property type="match status" value="1"/>
</dbReference>
<dbReference type="Pfam" id="PF00059">
    <property type="entry name" value="Lectin_C"/>
    <property type="match status" value="1"/>
</dbReference>
<dbReference type="SMART" id="SM00034">
    <property type="entry name" value="CLECT"/>
    <property type="match status" value="1"/>
</dbReference>
<dbReference type="SUPFAM" id="SSF56436">
    <property type="entry name" value="C-type lectin-like"/>
    <property type="match status" value="1"/>
</dbReference>
<dbReference type="PROSITE" id="PS50041">
    <property type="entry name" value="C_TYPE_LECTIN_2"/>
    <property type="match status" value="1"/>
</dbReference>
<name>KLRD1_BOVIN</name>
<proteinExistence type="evidence at transcript level"/>
<gene>
    <name type="primary">KLRD1</name>
    <name type="synonym">CD94</name>
</gene>
<sequence length="190" mass="21927">MAAFRTTAWRLISGVLGVICLVLMAALGVLLKNSLTKRSVQPGPSADLQEEYNLHEEEESCLGCLGSGCYSCQEKWIGYQCNCYFISNELKTWKDGRDFCVSHNSSLLQIQTRNEPAFMKFSTSFYWIGLSYDEEHHAWLWEDNSTLSQDLLPFFKSVNPKNCIMYNPRGRILDAYCEKKFRYICKQQLI</sequence>
<organism>
    <name type="scientific">Bos taurus</name>
    <name type="common">Bovine</name>
    <dbReference type="NCBI Taxonomy" id="9913"/>
    <lineage>
        <taxon>Eukaryota</taxon>
        <taxon>Metazoa</taxon>
        <taxon>Chordata</taxon>
        <taxon>Craniata</taxon>
        <taxon>Vertebrata</taxon>
        <taxon>Euteleostomi</taxon>
        <taxon>Mammalia</taxon>
        <taxon>Eutheria</taxon>
        <taxon>Laurasiatheria</taxon>
        <taxon>Artiodactyla</taxon>
        <taxon>Ruminantia</taxon>
        <taxon>Pecora</taxon>
        <taxon>Bovidae</taxon>
        <taxon>Bovinae</taxon>
        <taxon>Bos</taxon>
    </lineage>
</organism>
<feature type="chain" id="PRO_0000378460" description="Natural killer cells antigen CD94">
    <location>
        <begin position="1"/>
        <end position="190"/>
    </location>
</feature>
<feature type="topological domain" description="Cytoplasmic" evidence="2">
    <location>
        <begin position="1"/>
        <end position="10"/>
    </location>
</feature>
<feature type="transmembrane region" description="Helical; Signal-anchor for type II membrane protein" evidence="2">
    <location>
        <begin position="11"/>
        <end position="31"/>
    </location>
</feature>
<feature type="topological domain" description="Extracellular" evidence="2">
    <location>
        <begin position="32"/>
        <end position="190"/>
    </location>
</feature>
<feature type="domain" description="C-type lectin" evidence="3">
    <location>
        <begin position="79"/>
        <end position="186"/>
    </location>
</feature>
<feature type="glycosylation site" description="N-linked (GlcNAc...) asparagine" evidence="2">
    <location>
        <position position="104"/>
    </location>
</feature>
<feature type="glycosylation site" description="N-linked (GlcNAc...) asparagine" evidence="2">
    <location>
        <position position="144"/>
    </location>
</feature>
<feature type="disulfide bond" evidence="3">
    <location>
        <begin position="69"/>
        <end position="81"/>
    </location>
</feature>
<feature type="disulfide bond" evidence="3">
    <location>
        <begin position="72"/>
        <end position="83"/>
    </location>
</feature>
<feature type="disulfide bond" evidence="3">
    <location>
        <begin position="100"/>
        <end position="185"/>
    </location>
</feature>
<feature type="disulfide bond" evidence="3">
    <location>
        <begin position="163"/>
        <end position="177"/>
    </location>
</feature>
<feature type="sequence variant" description="In allele CD94-01 and allele CD94-03." evidence="4 5">
    <original>L</original>
    <variation>S</variation>
    <location>
        <position position="65"/>
    </location>
</feature>
<feature type="sequence variant" description="In allele CD94-01 and allele CD94-03." evidence="4 5">
    <original>F</original>
    <variation>L</variation>
    <location>
        <position position="85"/>
    </location>
</feature>
<feature type="sequence variant" description="In allele CD94-01 and allele CD94-03." evidence="4 5">
    <original>G</original>
    <variation>S</variation>
    <location>
        <position position="96"/>
    </location>
</feature>
<feature type="sequence variant" description="In allele CD94-01 and allele CD94-03." evidence="4 5">
    <original>P</original>
    <variation>L</variation>
    <location>
        <position position="116"/>
    </location>
</feature>
<feature type="sequence variant" description="In allele CD94-04." evidence="5">
    <original>F</original>
    <variation>L</variation>
    <location>
        <position position="155"/>
    </location>
</feature>
<feature type="sequence variant" description="In allele CD94-04." evidence="5">
    <original>N</original>
    <variation>T</variation>
    <location>
        <position position="167"/>
    </location>
</feature>
<feature type="sequence variant" description="In allele CD94-03." evidence="5">
    <original>P</original>
    <variation>S</variation>
    <location>
        <position position="168"/>
    </location>
</feature>
<feature type="sequence variant" description="In allele CD94-04." evidence="5">
    <original>Y</original>
    <variation>H</variation>
    <location>
        <position position="176"/>
    </location>
</feature>
<evidence type="ECO:0000250" key="1">
    <source>
        <dbReference type="UniProtKB" id="Q13241"/>
    </source>
</evidence>
<evidence type="ECO:0000255" key="2"/>
<evidence type="ECO:0000255" key="3">
    <source>
        <dbReference type="PROSITE-ProRule" id="PRU00040"/>
    </source>
</evidence>
<evidence type="ECO:0000269" key="4">
    <source>
    </source>
</evidence>
<evidence type="ECO:0000269" key="5">
    <source>
    </source>
</evidence>
<reference key="1">
    <citation type="journal article" date="2003" name="Eur. J. Immunol.">
        <title>Natural killer cell receptors in cattle: a bovine killer cell immunoglobulin-like receptor multigene family contains members with divergent signaling motifs.</title>
        <authorList>
            <person name="Storset A.K."/>
            <person name="Slettedal I.O."/>
            <person name="Williams J.L."/>
            <person name="Law A."/>
            <person name="Dissen E."/>
        </authorList>
    </citation>
    <scope>NUCLEOTIDE SEQUENCE [MRNA]</scope>
    <scope>VARIANTS SER-65; LEU-85; SER-96 AND LEU-116</scope>
</reference>
<reference key="2">
    <citation type="journal article" date="2007" name="Immunogenetics">
        <title>Complexity in the cattle CD94/NKG2 gene families.</title>
        <authorList>
            <person name="Birch J."/>
            <person name="Ellis S.A."/>
        </authorList>
    </citation>
    <scope>NUCLEOTIDE SEQUENCE [MRNA]</scope>
    <scope>VARIANTS SER-65; LEU-85; SER-96; LEU-116; LEU-155; THR-167; SER-168 AND HIS-176</scope>
</reference>
<comment type="function">
    <text evidence="1">Immune receptor involved in self-nonself discrimination. In complex with KLRC1 or KLRC2 on cytotoxic and regulatory lymphocyte subsets, recognizes non-classical major histocompatibility (MHC) class Ib molecule MHC-E loaded with self-peptides derived from the signal sequence of classical MHC class Ia and non-classical MHC class Ib molecules. Enables cytotoxic cells to monitor the expression of MHC class I molecules in healthy cells and to tolerate self. Primarily functions as a ligand binding subunit as it lacks the capacity to signal.</text>
</comment>
<comment type="function">
    <text evidence="1">KLRD1-KLRC1 acts as an immune inhibitory receptor. Key inhibitory receptor on natural killer (NK) cells that regulates their activation and effector functions. Dominantly counteracts T cell receptor signaling on a subset of memory/effector CD8-positive T cells as part of an antigen-driven response to avoid autoimmunity. On intraepithelial CD8-positive gamma-delta regulatory T cells triggers TGFB1 secretion, which in turn limits the cytotoxic programming of intraepithelial CD8-positive alpha-beta T cells, distinguishing harmless from pathogenic antigens. In MHC-E-rich tumor microenvironment, acts as an immune inhibitory checkpoint and may contribute to progressive loss of effector functions of NK cells and tumor-specific T cells, a state known as cell exhaustion. Upon MHC-E-peptide binding, transmits intracellular signals through KLRC1 immunoreceptor tyrosine-based inhibition motifs (ITIMs) by recruiting INPP5D/SHIP-1 and INPPL1/SHIP-2 tyrosine phosphatases to ITIMs, and ultimately opposing signals transmitted by activating receptors through dephosphorylation of proximal signaling molecules.</text>
</comment>
<comment type="function">
    <text evidence="1">KLRD1-KLRC2 acts as an immune activating receptor. On cytotoxic lymphocyte subsets recognizes MHC-E loaded with signal sequence-derived peptides from non-classical MHC class Ib MHC-G molecules, likely playing a role in the generation and effector functions of adaptive NK cells and in maternal-fetal tolerance during pregnancy. Regulates the effector functions of terminally differentiated cytotoxic lymphocyte subsets, and in particular may play a role in adaptive NK cell response to viral infection. Upon MHC-E-peptide binding, transmits intracellular signals via the adapter protein TYROBP/DAP12, triggering the phosphorylation of proximal signaling molecules and cell activation.</text>
</comment>
<comment type="subunit">
    <text evidence="1">Can form disulfide-bonded heterodimer with NKG2 family members KLRC1 and KLRC2. KLRD1-KLRC1 heterodimer interacts with peptide-bound MHC-E-B2M heterotrimeric complex. KLRD1 plays a prominent role in directly interacting with MHC-E. KLRD1-KLRC1 interacts with much higher affinity with peptide-bound MHC-E-B2M than KLRD1-KLRC2. Interacts with the adapter protein TYROBP/DAP12; this interaction is required for cell surface expression and cell activation.</text>
</comment>
<comment type="subcellular location">
    <subcellularLocation>
        <location evidence="1">Cell membrane</location>
        <topology evidence="2">Single-pass type II membrane protein</topology>
    </subcellularLocation>
</comment>